<reference key="1">
    <citation type="journal article" date="2009" name="PLoS Pathog.">
        <title>Genomic evidence for the evolution of Streptococcus equi: host restriction, increased virulence, and genetic exchange with human pathogens.</title>
        <authorList>
            <person name="Holden M.T.G."/>
            <person name="Heather Z."/>
            <person name="Paillot R."/>
            <person name="Steward K.F."/>
            <person name="Webb K."/>
            <person name="Ainslie F."/>
            <person name="Jourdan T."/>
            <person name="Bason N.C."/>
            <person name="Holroyd N.E."/>
            <person name="Mungall K."/>
            <person name="Quail M.A."/>
            <person name="Sanders M."/>
            <person name="Simmonds M."/>
            <person name="Willey D."/>
            <person name="Brooks K."/>
            <person name="Aanensen D.M."/>
            <person name="Spratt B.G."/>
            <person name="Jolley K.A."/>
            <person name="Maiden M.C.J."/>
            <person name="Kehoe M."/>
            <person name="Chanter N."/>
            <person name="Bentley S.D."/>
            <person name="Robinson C."/>
            <person name="Maskell D.J."/>
            <person name="Parkhill J."/>
            <person name="Waller A.S."/>
        </authorList>
    </citation>
    <scope>NUCLEOTIDE SEQUENCE [LARGE SCALE GENOMIC DNA]</scope>
    <source>
        <strain>H70</strain>
    </source>
</reference>
<name>RPOY_STRS7</name>
<keyword id="KW-0240">DNA-directed RNA polymerase</keyword>
<keyword id="KW-0548">Nucleotidyltransferase</keyword>
<keyword id="KW-0804">Transcription</keyword>
<keyword id="KW-0808">Transferase</keyword>
<dbReference type="EC" id="2.7.7.6" evidence="1"/>
<dbReference type="EMBL" id="FM204884">
    <property type="protein sequence ID" value="CAX00452.1"/>
    <property type="molecule type" value="Genomic_DNA"/>
</dbReference>
<dbReference type="SMR" id="C0MF12"/>
<dbReference type="KEGG" id="seq:SZO_16760"/>
<dbReference type="eggNOG" id="COG5503">
    <property type="taxonomic scope" value="Bacteria"/>
</dbReference>
<dbReference type="HOGENOM" id="CLU_187518_0_0_9"/>
<dbReference type="Proteomes" id="UP000001368">
    <property type="component" value="Chromosome"/>
</dbReference>
<dbReference type="GO" id="GO:0000428">
    <property type="term" value="C:DNA-directed RNA polymerase complex"/>
    <property type="evidence" value="ECO:0007669"/>
    <property type="project" value="UniProtKB-KW"/>
</dbReference>
<dbReference type="GO" id="GO:0003677">
    <property type="term" value="F:DNA binding"/>
    <property type="evidence" value="ECO:0007669"/>
    <property type="project" value="UniProtKB-UniRule"/>
</dbReference>
<dbReference type="GO" id="GO:0003899">
    <property type="term" value="F:DNA-directed RNA polymerase activity"/>
    <property type="evidence" value="ECO:0007669"/>
    <property type="project" value="UniProtKB-UniRule"/>
</dbReference>
<dbReference type="GO" id="GO:0006351">
    <property type="term" value="P:DNA-templated transcription"/>
    <property type="evidence" value="ECO:0007669"/>
    <property type="project" value="UniProtKB-UniRule"/>
</dbReference>
<dbReference type="Gene3D" id="3.10.20.730">
    <property type="entry name" value="RNAP, epsilon subunit-like"/>
    <property type="match status" value="1"/>
</dbReference>
<dbReference type="HAMAP" id="MF_01553">
    <property type="entry name" value="RNApol_bact_RpoY"/>
    <property type="match status" value="1"/>
</dbReference>
<dbReference type="InterPro" id="IPR009907">
    <property type="entry name" value="RpoY"/>
</dbReference>
<dbReference type="NCBIfam" id="NF010188">
    <property type="entry name" value="PRK13667.1"/>
    <property type="match status" value="1"/>
</dbReference>
<dbReference type="Pfam" id="PF07288">
    <property type="entry name" value="RpoY"/>
    <property type="match status" value="1"/>
</dbReference>
<accession>C0MF12</accession>
<proteinExistence type="inferred from homology"/>
<comment type="function">
    <text evidence="1">A non-essential component of RNA polymerase (RNAP).</text>
</comment>
<comment type="catalytic activity">
    <reaction evidence="1">
        <text>RNA(n) + a ribonucleoside 5'-triphosphate = RNA(n+1) + diphosphate</text>
        <dbReference type="Rhea" id="RHEA:21248"/>
        <dbReference type="Rhea" id="RHEA-COMP:14527"/>
        <dbReference type="Rhea" id="RHEA-COMP:17342"/>
        <dbReference type="ChEBI" id="CHEBI:33019"/>
        <dbReference type="ChEBI" id="CHEBI:61557"/>
        <dbReference type="ChEBI" id="CHEBI:140395"/>
        <dbReference type="EC" id="2.7.7.6"/>
    </reaction>
</comment>
<comment type="subunit">
    <text evidence="1">RNAP is composed of a core of 2 alpha, a beta and a beta' subunit. The core is associated with a delta subunit, and at least one of epsilon or omega. When a sigma factor is associated with the core the holoenzyme is formed, which can initiate transcription.</text>
</comment>
<comment type="similarity">
    <text evidence="1">Belongs to the RNA polymerase subunit epsilon family.</text>
</comment>
<protein>
    <recommendedName>
        <fullName evidence="1">DNA-directed RNA polymerase subunit epsilon</fullName>
        <shortName evidence="1">RNAP epsilon subunit</shortName>
        <ecNumber evidence="1">2.7.7.6</ecNumber>
    </recommendedName>
    <alternativeName>
        <fullName evidence="1">RNA polymerase epsilon subunit</fullName>
    </alternativeName>
    <alternativeName>
        <fullName evidence="1">Transcriptase subunit epsilon</fullName>
    </alternativeName>
</protein>
<evidence type="ECO:0000255" key="1">
    <source>
        <dbReference type="HAMAP-Rule" id="MF_01553"/>
    </source>
</evidence>
<feature type="chain" id="PRO_1000215481" description="DNA-directed RNA polymerase subunit epsilon">
    <location>
        <begin position="1"/>
        <end position="76"/>
    </location>
</feature>
<gene>
    <name evidence="1" type="primary">rpoY</name>
    <name type="ordered locus">SZO_16760</name>
</gene>
<sequence>MIYKVFYQETKERSPRRENTQALYLDIDAASELEGRIKARKMVEEHTDYNVEFIELLSDKHLDYEKETGVFELTEF</sequence>
<organism>
    <name type="scientific">Streptococcus equi subsp. zooepidemicus (strain H70)</name>
    <dbReference type="NCBI Taxonomy" id="553483"/>
    <lineage>
        <taxon>Bacteria</taxon>
        <taxon>Bacillati</taxon>
        <taxon>Bacillota</taxon>
        <taxon>Bacilli</taxon>
        <taxon>Lactobacillales</taxon>
        <taxon>Streptococcaceae</taxon>
        <taxon>Streptococcus</taxon>
    </lineage>
</organism>